<evidence type="ECO:0000255" key="1">
    <source>
        <dbReference type="HAMAP-Rule" id="MF_00753"/>
    </source>
</evidence>
<name>GLPB_YERPN</name>
<proteinExistence type="inferred from homology"/>
<reference key="1">
    <citation type="journal article" date="2006" name="J. Bacteriol.">
        <title>Complete genome sequence of Yersinia pestis strains Antiqua and Nepal516: evidence of gene reduction in an emerging pathogen.</title>
        <authorList>
            <person name="Chain P.S.G."/>
            <person name="Hu P."/>
            <person name="Malfatti S.A."/>
            <person name="Radnedge L."/>
            <person name="Larimer F."/>
            <person name="Vergez L.M."/>
            <person name="Worsham P."/>
            <person name="Chu M.C."/>
            <person name="Andersen G.L."/>
        </authorList>
    </citation>
    <scope>NUCLEOTIDE SEQUENCE [LARGE SCALE GENOMIC DNA]</scope>
    <source>
        <strain>Nepal516</strain>
    </source>
</reference>
<reference key="2">
    <citation type="submission" date="2009-04" db="EMBL/GenBank/DDBJ databases">
        <title>Yersinia pestis Nepal516A whole genome shotgun sequencing project.</title>
        <authorList>
            <person name="Plunkett G. III"/>
            <person name="Anderson B.D."/>
            <person name="Baumler D.J."/>
            <person name="Burland V."/>
            <person name="Cabot E.L."/>
            <person name="Glasner J.D."/>
            <person name="Mau B."/>
            <person name="Neeno-Eckwall E."/>
            <person name="Perna N.T."/>
            <person name="Munk A.C."/>
            <person name="Tapia R."/>
            <person name="Green L.D."/>
            <person name="Rogers Y.C."/>
            <person name="Detter J.C."/>
            <person name="Bruce D.C."/>
            <person name="Brettin T.S."/>
        </authorList>
    </citation>
    <scope>NUCLEOTIDE SEQUENCE [LARGE SCALE GENOMIC DNA]</scope>
    <source>
        <strain>Nepal516</strain>
    </source>
</reference>
<feature type="chain" id="PRO_0000258912" description="Anaerobic glycerol-3-phosphate dehydrogenase subunit B">
    <location>
        <begin position="1"/>
        <end position="424"/>
    </location>
</feature>
<organism>
    <name type="scientific">Yersinia pestis bv. Antiqua (strain Nepal516)</name>
    <dbReference type="NCBI Taxonomy" id="377628"/>
    <lineage>
        <taxon>Bacteria</taxon>
        <taxon>Pseudomonadati</taxon>
        <taxon>Pseudomonadota</taxon>
        <taxon>Gammaproteobacteria</taxon>
        <taxon>Enterobacterales</taxon>
        <taxon>Yersiniaceae</taxon>
        <taxon>Yersinia</taxon>
    </lineage>
</organism>
<accession>Q1CNF8</accession>
<accession>D1Q130</accession>
<protein>
    <recommendedName>
        <fullName evidence="1">Anaerobic glycerol-3-phosphate dehydrogenase subunit B</fullName>
        <shortName evidence="1">Anaerobic G-3-P dehydrogenase subunit B</shortName>
        <shortName evidence="1">Anaerobic G3Pdhase B</shortName>
        <ecNumber evidence="1">1.1.5.3</ecNumber>
    </recommendedName>
</protein>
<gene>
    <name evidence="1" type="primary">glpB</name>
    <name type="ordered locus">YPN_0139</name>
    <name type="ORF">YP516_0102</name>
</gene>
<comment type="function">
    <text evidence="1">Conversion of glycerol 3-phosphate to dihydroxyacetone. Uses fumarate or nitrate as electron acceptor.</text>
</comment>
<comment type="catalytic activity">
    <reaction evidence="1">
        <text>a quinone + sn-glycerol 3-phosphate = dihydroxyacetone phosphate + a quinol</text>
        <dbReference type="Rhea" id="RHEA:18977"/>
        <dbReference type="ChEBI" id="CHEBI:24646"/>
        <dbReference type="ChEBI" id="CHEBI:57597"/>
        <dbReference type="ChEBI" id="CHEBI:57642"/>
        <dbReference type="ChEBI" id="CHEBI:132124"/>
        <dbReference type="EC" id="1.1.5.3"/>
    </reaction>
</comment>
<comment type="cofactor">
    <cofactor evidence="1">
        <name>FMN</name>
        <dbReference type="ChEBI" id="CHEBI:58210"/>
    </cofactor>
</comment>
<comment type="pathway">
    <text evidence="1">Polyol metabolism; glycerol degradation via glycerol kinase pathway; glycerone phosphate from sn-glycerol 3-phosphate (anaerobic route): step 1/1.</text>
</comment>
<comment type="subunit">
    <text evidence="1">Composed of a catalytic GlpA/B dimer and of membrane bound GlpC.</text>
</comment>
<comment type="similarity">
    <text evidence="1">Belongs to the anaerobic G-3-P dehydrogenase subunit B family.</text>
</comment>
<dbReference type="EC" id="1.1.5.3" evidence="1"/>
<dbReference type="EMBL" id="CP000305">
    <property type="protein sequence ID" value="ABG16472.1"/>
    <property type="molecule type" value="Genomic_DNA"/>
</dbReference>
<dbReference type="EMBL" id="ACNQ01000001">
    <property type="protein sequence ID" value="EEO78584.1"/>
    <property type="molecule type" value="Genomic_DNA"/>
</dbReference>
<dbReference type="RefSeq" id="WP_002211492.1">
    <property type="nucleotide sequence ID" value="NZ_ACNQ01000001.1"/>
</dbReference>
<dbReference type="GeneID" id="57974883"/>
<dbReference type="KEGG" id="ypn:YPN_0139"/>
<dbReference type="HOGENOM" id="CLU_047793_0_0_6"/>
<dbReference type="UniPathway" id="UPA00618">
    <property type="reaction ID" value="UER00673"/>
</dbReference>
<dbReference type="Proteomes" id="UP000008936">
    <property type="component" value="Chromosome"/>
</dbReference>
<dbReference type="GO" id="GO:0009331">
    <property type="term" value="C:glycerol-3-phosphate dehydrogenase (FAD) complex"/>
    <property type="evidence" value="ECO:0007669"/>
    <property type="project" value="InterPro"/>
</dbReference>
<dbReference type="GO" id="GO:0004368">
    <property type="term" value="F:glycerol-3-phosphate dehydrogenase (quinone) activity"/>
    <property type="evidence" value="ECO:0007669"/>
    <property type="project" value="UniProtKB-UniRule"/>
</dbReference>
<dbReference type="GO" id="GO:0019563">
    <property type="term" value="P:glycerol catabolic process"/>
    <property type="evidence" value="ECO:0007669"/>
    <property type="project" value="UniProtKB-UniRule"/>
</dbReference>
<dbReference type="Gene3D" id="3.50.50.60">
    <property type="entry name" value="FAD/NAD(P)-binding domain"/>
    <property type="match status" value="1"/>
</dbReference>
<dbReference type="HAMAP" id="MF_00753">
    <property type="entry name" value="Glycerol3P_GlpB"/>
    <property type="match status" value="1"/>
</dbReference>
<dbReference type="InterPro" id="IPR003953">
    <property type="entry name" value="FAD-dep_OxRdtase_2_FAD-bd"/>
</dbReference>
<dbReference type="InterPro" id="IPR036188">
    <property type="entry name" value="FAD/NAD-bd_sf"/>
</dbReference>
<dbReference type="InterPro" id="IPR009158">
    <property type="entry name" value="G3P_DH_GlpB_su"/>
</dbReference>
<dbReference type="NCBIfam" id="TIGR03378">
    <property type="entry name" value="glycerol3P_GlpB"/>
    <property type="match status" value="1"/>
</dbReference>
<dbReference type="NCBIfam" id="NF003718">
    <property type="entry name" value="PRK05329.1-1"/>
    <property type="match status" value="1"/>
</dbReference>
<dbReference type="NCBIfam" id="NF003719">
    <property type="entry name" value="PRK05329.1-2"/>
    <property type="match status" value="1"/>
</dbReference>
<dbReference type="NCBIfam" id="NF003720">
    <property type="entry name" value="PRK05329.1-3"/>
    <property type="match status" value="1"/>
</dbReference>
<dbReference type="NCBIfam" id="NF003721">
    <property type="entry name" value="PRK05329.1-4"/>
    <property type="match status" value="1"/>
</dbReference>
<dbReference type="PANTHER" id="PTHR43734:SF7">
    <property type="entry name" value="4,4'-DIAPONEUROSPORENE OXYGENASE"/>
    <property type="match status" value="1"/>
</dbReference>
<dbReference type="PANTHER" id="PTHR43734">
    <property type="entry name" value="PHYTOENE DESATURASE"/>
    <property type="match status" value="1"/>
</dbReference>
<dbReference type="Pfam" id="PF00890">
    <property type="entry name" value="FAD_binding_2"/>
    <property type="match status" value="1"/>
</dbReference>
<dbReference type="PIRSF" id="PIRSF000141">
    <property type="entry name" value="Anaerobic_G3P_dh"/>
    <property type="match status" value="1"/>
</dbReference>
<dbReference type="SUPFAM" id="SSF51905">
    <property type="entry name" value="FAD/NAD(P)-binding domain"/>
    <property type="match status" value="1"/>
</dbReference>
<sequence length="424" mass="45506">MKFDVIIIGGGLAGLACGIRLAEQGKYCAIVSSGQNALHFSSGSLDLLAKLPDGQAVSQPLSALSALAELAPEHPYSKMRNITQLDELVQEAEALLRRCGLDIVGSSAENHLRLTPLGSCRPTWLSLADIPVAPLNGPLPWQRVAVIGIEGFLDFQPQMVASALQDQGIDATADYLHLPALDRLRDNPSEFRAVNIARILDLPENRQPLADELSRLSSTAEMILLPACIGLDKSAPLDALRAVVGKPIQLLPTLPPSLLGMRLHQALRHRFQQLGGLVMPGDAVLRAELVDNRITGLYSRNHGDIPLRAAQMVLASGSFFSNGLVATFDKIYEPILDLDILSLPHRADWSHSNLFAPQPYLQFGVNTDNHLRPLRGGVALENLHAIGAVLGGYDPLQQGCGAGVSLTSAVFVAEQIISEMAVTL</sequence>
<keyword id="KW-0285">Flavoprotein</keyword>
<keyword id="KW-0288">FMN</keyword>
<keyword id="KW-0560">Oxidoreductase</keyword>